<accession>Q8ESR9</accession>
<sequence length="194" mass="21228">MRKASLSRKTNETSVHLTLELDGEGTSTIETGIGFFDHMLTLLAKHGGINLDLSCDGDLEVDQHHTVEDIGIVLGQTLREALGNKEGITRYANVMSPMDEALSSIAFDISGRSYLVYNVEGLKEKVGTFDTELVQEFFQAFASNAQVTLHINLLYGVNSHHIIESIFKGFGRVIRQGCSIDLNQKGIPSTKGSL</sequence>
<dbReference type="EC" id="4.2.1.19" evidence="1"/>
<dbReference type="EMBL" id="BA000028">
    <property type="protein sequence ID" value="BAC12506.1"/>
    <property type="molecule type" value="Genomic_DNA"/>
</dbReference>
<dbReference type="RefSeq" id="WP_011064953.1">
    <property type="nucleotide sequence ID" value="NC_004193.1"/>
</dbReference>
<dbReference type="SMR" id="Q8ESR9"/>
<dbReference type="STRING" id="221109.gene:10732754"/>
<dbReference type="KEGG" id="oih:OB0550"/>
<dbReference type="eggNOG" id="COG0131">
    <property type="taxonomic scope" value="Bacteria"/>
</dbReference>
<dbReference type="HOGENOM" id="CLU_044308_3_0_9"/>
<dbReference type="OrthoDB" id="9790411at2"/>
<dbReference type="PhylomeDB" id="Q8ESR9"/>
<dbReference type="UniPathway" id="UPA00031">
    <property type="reaction ID" value="UER00011"/>
</dbReference>
<dbReference type="Proteomes" id="UP000000822">
    <property type="component" value="Chromosome"/>
</dbReference>
<dbReference type="GO" id="GO:0005737">
    <property type="term" value="C:cytoplasm"/>
    <property type="evidence" value="ECO:0007669"/>
    <property type="project" value="UniProtKB-SubCell"/>
</dbReference>
<dbReference type="GO" id="GO:0004424">
    <property type="term" value="F:imidazoleglycerol-phosphate dehydratase activity"/>
    <property type="evidence" value="ECO:0007669"/>
    <property type="project" value="UniProtKB-UniRule"/>
</dbReference>
<dbReference type="GO" id="GO:0000105">
    <property type="term" value="P:L-histidine biosynthetic process"/>
    <property type="evidence" value="ECO:0007669"/>
    <property type="project" value="UniProtKB-UniRule"/>
</dbReference>
<dbReference type="CDD" id="cd07914">
    <property type="entry name" value="IGPD"/>
    <property type="match status" value="1"/>
</dbReference>
<dbReference type="FunFam" id="3.30.230.40:FF:000001">
    <property type="entry name" value="Imidazoleglycerol-phosphate dehydratase HisB"/>
    <property type="match status" value="1"/>
</dbReference>
<dbReference type="FunFam" id="3.30.230.40:FF:000003">
    <property type="entry name" value="Imidazoleglycerol-phosphate dehydratase HisB"/>
    <property type="match status" value="1"/>
</dbReference>
<dbReference type="Gene3D" id="3.30.230.40">
    <property type="entry name" value="Imidazole glycerol phosphate dehydratase, domain 1"/>
    <property type="match status" value="2"/>
</dbReference>
<dbReference type="HAMAP" id="MF_00076">
    <property type="entry name" value="HisB"/>
    <property type="match status" value="1"/>
</dbReference>
<dbReference type="InterPro" id="IPR038494">
    <property type="entry name" value="IGPD_sf"/>
</dbReference>
<dbReference type="InterPro" id="IPR000807">
    <property type="entry name" value="ImidazoleglycerolP_deHydtase"/>
</dbReference>
<dbReference type="InterPro" id="IPR020565">
    <property type="entry name" value="ImidazoleglycerP_deHydtase_CS"/>
</dbReference>
<dbReference type="InterPro" id="IPR020568">
    <property type="entry name" value="Ribosomal_Su5_D2-typ_SF"/>
</dbReference>
<dbReference type="NCBIfam" id="NF002107">
    <property type="entry name" value="PRK00951.1-2"/>
    <property type="match status" value="1"/>
</dbReference>
<dbReference type="NCBIfam" id="NF002109">
    <property type="entry name" value="PRK00951.1-5"/>
    <property type="match status" value="1"/>
</dbReference>
<dbReference type="NCBIfam" id="NF002111">
    <property type="entry name" value="PRK00951.2-1"/>
    <property type="match status" value="1"/>
</dbReference>
<dbReference type="NCBIfam" id="NF002114">
    <property type="entry name" value="PRK00951.2-4"/>
    <property type="match status" value="1"/>
</dbReference>
<dbReference type="PANTHER" id="PTHR23133:SF2">
    <property type="entry name" value="IMIDAZOLEGLYCEROL-PHOSPHATE DEHYDRATASE"/>
    <property type="match status" value="1"/>
</dbReference>
<dbReference type="PANTHER" id="PTHR23133">
    <property type="entry name" value="IMIDAZOLEGLYCEROL-PHOSPHATE DEHYDRATASE HIS7"/>
    <property type="match status" value="1"/>
</dbReference>
<dbReference type="Pfam" id="PF00475">
    <property type="entry name" value="IGPD"/>
    <property type="match status" value="1"/>
</dbReference>
<dbReference type="SUPFAM" id="SSF54211">
    <property type="entry name" value="Ribosomal protein S5 domain 2-like"/>
    <property type="match status" value="2"/>
</dbReference>
<dbReference type="PROSITE" id="PS00954">
    <property type="entry name" value="IGP_DEHYDRATASE_1"/>
    <property type="match status" value="1"/>
</dbReference>
<dbReference type="PROSITE" id="PS00955">
    <property type="entry name" value="IGP_DEHYDRATASE_2"/>
    <property type="match status" value="1"/>
</dbReference>
<organism>
    <name type="scientific">Oceanobacillus iheyensis (strain DSM 14371 / CIP 107618 / JCM 11309 / KCTC 3954 / HTE831)</name>
    <dbReference type="NCBI Taxonomy" id="221109"/>
    <lineage>
        <taxon>Bacteria</taxon>
        <taxon>Bacillati</taxon>
        <taxon>Bacillota</taxon>
        <taxon>Bacilli</taxon>
        <taxon>Bacillales</taxon>
        <taxon>Bacillaceae</taxon>
        <taxon>Oceanobacillus</taxon>
    </lineage>
</organism>
<proteinExistence type="inferred from homology"/>
<name>HIS7_OCEIH</name>
<feature type="chain" id="PRO_0000158151" description="Imidazoleglycerol-phosphate dehydratase">
    <location>
        <begin position="1"/>
        <end position="194"/>
    </location>
</feature>
<reference key="1">
    <citation type="journal article" date="2002" name="Nucleic Acids Res.">
        <title>Genome sequence of Oceanobacillus iheyensis isolated from the Iheya Ridge and its unexpected adaptive capabilities to extreme environments.</title>
        <authorList>
            <person name="Takami H."/>
            <person name="Takaki Y."/>
            <person name="Uchiyama I."/>
        </authorList>
    </citation>
    <scope>NUCLEOTIDE SEQUENCE [LARGE SCALE GENOMIC DNA]</scope>
    <source>
        <strain>DSM 14371 / CIP 107618 / JCM 11309 / KCTC 3954 / HTE831</strain>
    </source>
</reference>
<evidence type="ECO:0000255" key="1">
    <source>
        <dbReference type="HAMAP-Rule" id="MF_00076"/>
    </source>
</evidence>
<comment type="catalytic activity">
    <reaction evidence="1">
        <text>D-erythro-1-(imidazol-4-yl)glycerol 3-phosphate = 3-(imidazol-4-yl)-2-oxopropyl phosphate + H2O</text>
        <dbReference type="Rhea" id="RHEA:11040"/>
        <dbReference type="ChEBI" id="CHEBI:15377"/>
        <dbReference type="ChEBI" id="CHEBI:57766"/>
        <dbReference type="ChEBI" id="CHEBI:58278"/>
        <dbReference type="EC" id="4.2.1.19"/>
    </reaction>
</comment>
<comment type="pathway">
    <text evidence="1">Amino-acid biosynthesis; L-histidine biosynthesis; L-histidine from 5-phospho-alpha-D-ribose 1-diphosphate: step 6/9.</text>
</comment>
<comment type="subcellular location">
    <subcellularLocation>
        <location evidence="1">Cytoplasm</location>
    </subcellularLocation>
</comment>
<comment type="similarity">
    <text evidence="1">Belongs to the imidazoleglycerol-phosphate dehydratase family.</text>
</comment>
<keyword id="KW-0028">Amino-acid biosynthesis</keyword>
<keyword id="KW-0963">Cytoplasm</keyword>
<keyword id="KW-0368">Histidine biosynthesis</keyword>
<keyword id="KW-0456">Lyase</keyword>
<keyword id="KW-1185">Reference proteome</keyword>
<gene>
    <name evidence="1" type="primary">hisB</name>
    <name type="ordered locus">OB0550</name>
</gene>
<protein>
    <recommendedName>
        <fullName evidence="1">Imidazoleglycerol-phosphate dehydratase</fullName>
        <shortName evidence="1">IGPD</shortName>
        <ecNumber evidence="1">4.2.1.19</ecNumber>
    </recommendedName>
</protein>